<protein>
    <recommendedName>
        <fullName evidence="1">Ribonuclease HII</fullName>
        <shortName evidence="1">RNase HII</shortName>
        <ecNumber evidence="1">3.1.26.4</ecNumber>
    </recommendedName>
</protein>
<evidence type="ECO:0000255" key="1">
    <source>
        <dbReference type="HAMAP-Rule" id="MF_00052"/>
    </source>
</evidence>
<evidence type="ECO:0000255" key="2">
    <source>
        <dbReference type="PROSITE-ProRule" id="PRU01319"/>
    </source>
</evidence>
<gene>
    <name evidence="1" type="primary">rnhB</name>
    <name type="ordered locus">BG0045</name>
</gene>
<reference key="1">
    <citation type="journal article" date="2004" name="Nucleic Acids Res.">
        <title>Comparative analysis of the Borrelia garinii genome.</title>
        <authorList>
            <person name="Gloeckner G."/>
            <person name="Lehmann R."/>
            <person name="Romualdi A."/>
            <person name="Pradella S."/>
            <person name="Schulte-Spechtel U."/>
            <person name="Schilhabel M."/>
            <person name="Wilske B."/>
            <person name="Suehnel J."/>
            <person name="Platzer M."/>
        </authorList>
    </citation>
    <scope>NUCLEOTIDE SEQUENCE [LARGE SCALE GENOMIC DNA]</scope>
    <source>
        <strain>ATCC BAA-2496 / DSM 23469 / PBi</strain>
    </source>
</reference>
<dbReference type="EC" id="3.1.26.4" evidence="1"/>
<dbReference type="EMBL" id="CP000013">
    <property type="protein sequence ID" value="AAU06904.1"/>
    <property type="molecule type" value="Genomic_DNA"/>
</dbReference>
<dbReference type="RefSeq" id="WP_011193399.1">
    <property type="nucleotide sequence ID" value="NZ_CP028872.1"/>
</dbReference>
<dbReference type="SMR" id="Q662W7"/>
<dbReference type="GeneID" id="45160844"/>
<dbReference type="KEGG" id="bga:BG0045"/>
<dbReference type="eggNOG" id="COG0164">
    <property type="taxonomic scope" value="Bacteria"/>
</dbReference>
<dbReference type="HOGENOM" id="CLU_036532_3_1_12"/>
<dbReference type="OrthoDB" id="9803420at2"/>
<dbReference type="Proteomes" id="UP000002276">
    <property type="component" value="Chromosome"/>
</dbReference>
<dbReference type="GO" id="GO:0005737">
    <property type="term" value="C:cytoplasm"/>
    <property type="evidence" value="ECO:0007669"/>
    <property type="project" value="UniProtKB-SubCell"/>
</dbReference>
<dbReference type="GO" id="GO:0032299">
    <property type="term" value="C:ribonuclease H2 complex"/>
    <property type="evidence" value="ECO:0007669"/>
    <property type="project" value="TreeGrafter"/>
</dbReference>
<dbReference type="GO" id="GO:0030145">
    <property type="term" value="F:manganese ion binding"/>
    <property type="evidence" value="ECO:0007669"/>
    <property type="project" value="UniProtKB-UniRule"/>
</dbReference>
<dbReference type="GO" id="GO:0003723">
    <property type="term" value="F:RNA binding"/>
    <property type="evidence" value="ECO:0007669"/>
    <property type="project" value="InterPro"/>
</dbReference>
<dbReference type="GO" id="GO:0004523">
    <property type="term" value="F:RNA-DNA hybrid ribonuclease activity"/>
    <property type="evidence" value="ECO:0007669"/>
    <property type="project" value="UniProtKB-UniRule"/>
</dbReference>
<dbReference type="GO" id="GO:0043137">
    <property type="term" value="P:DNA replication, removal of RNA primer"/>
    <property type="evidence" value="ECO:0007669"/>
    <property type="project" value="TreeGrafter"/>
</dbReference>
<dbReference type="GO" id="GO:0006298">
    <property type="term" value="P:mismatch repair"/>
    <property type="evidence" value="ECO:0007669"/>
    <property type="project" value="TreeGrafter"/>
</dbReference>
<dbReference type="CDD" id="cd07182">
    <property type="entry name" value="RNase_HII_bacteria_HII_like"/>
    <property type="match status" value="1"/>
</dbReference>
<dbReference type="Gene3D" id="3.30.420.10">
    <property type="entry name" value="Ribonuclease H-like superfamily/Ribonuclease H"/>
    <property type="match status" value="1"/>
</dbReference>
<dbReference type="HAMAP" id="MF_00052_B">
    <property type="entry name" value="RNase_HII_B"/>
    <property type="match status" value="1"/>
</dbReference>
<dbReference type="InterPro" id="IPR022898">
    <property type="entry name" value="RNase_HII"/>
</dbReference>
<dbReference type="InterPro" id="IPR001352">
    <property type="entry name" value="RNase_HII/HIII"/>
</dbReference>
<dbReference type="InterPro" id="IPR024567">
    <property type="entry name" value="RNase_HII/HIII_dom"/>
</dbReference>
<dbReference type="InterPro" id="IPR012337">
    <property type="entry name" value="RNaseH-like_sf"/>
</dbReference>
<dbReference type="InterPro" id="IPR036397">
    <property type="entry name" value="RNaseH_sf"/>
</dbReference>
<dbReference type="NCBIfam" id="NF000595">
    <property type="entry name" value="PRK00015.1-3"/>
    <property type="match status" value="1"/>
</dbReference>
<dbReference type="PANTHER" id="PTHR10954">
    <property type="entry name" value="RIBONUCLEASE H2 SUBUNIT A"/>
    <property type="match status" value="1"/>
</dbReference>
<dbReference type="PANTHER" id="PTHR10954:SF18">
    <property type="entry name" value="RIBONUCLEASE HII"/>
    <property type="match status" value="1"/>
</dbReference>
<dbReference type="Pfam" id="PF01351">
    <property type="entry name" value="RNase_HII"/>
    <property type="match status" value="1"/>
</dbReference>
<dbReference type="SUPFAM" id="SSF53098">
    <property type="entry name" value="Ribonuclease H-like"/>
    <property type="match status" value="1"/>
</dbReference>
<dbReference type="PROSITE" id="PS51975">
    <property type="entry name" value="RNASE_H_2"/>
    <property type="match status" value="1"/>
</dbReference>
<sequence length="181" mass="20643">MICGIDEVGRGCIFGPVLSAAVVFKKKPNFIKELDDSKKLKKEKREYLSSLILENSYYAFAEISNIIIEKINIHNATLLAMQTAYENLKLNCSLVFVDGKFVPKITAKTVKAIIKGDSIIDEIKAASIIAKVKRDKLMDEYDKIYPLYLLRKNKGYPTKEHKNAIKKYGVLSLHRRNFKLI</sequence>
<proteinExistence type="inferred from homology"/>
<organism>
    <name type="scientific">Borrelia garinii subsp. bavariensis (strain ATCC BAA-2496 / DSM 23469 / PBi)</name>
    <name type="common">Borreliella bavariensis</name>
    <dbReference type="NCBI Taxonomy" id="290434"/>
    <lineage>
        <taxon>Bacteria</taxon>
        <taxon>Pseudomonadati</taxon>
        <taxon>Spirochaetota</taxon>
        <taxon>Spirochaetia</taxon>
        <taxon>Spirochaetales</taxon>
        <taxon>Borreliaceae</taxon>
        <taxon>Borreliella</taxon>
    </lineage>
</organism>
<feature type="chain" id="PRO_0000111546" description="Ribonuclease HII">
    <location>
        <begin position="1"/>
        <end position="181"/>
    </location>
</feature>
<feature type="domain" description="RNase H type-2" evidence="2">
    <location>
        <begin position="1"/>
        <end position="181"/>
    </location>
</feature>
<feature type="binding site" evidence="1">
    <location>
        <position position="6"/>
    </location>
    <ligand>
        <name>a divalent metal cation</name>
        <dbReference type="ChEBI" id="CHEBI:60240"/>
    </ligand>
</feature>
<feature type="binding site" evidence="1">
    <location>
        <position position="7"/>
    </location>
    <ligand>
        <name>a divalent metal cation</name>
        <dbReference type="ChEBI" id="CHEBI:60240"/>
    </ligand>
</feature>
<feature type="binding site" evidence="1">
    <location>
        <position position="98"/>
    </location>
    <ligand>
        <name>a divalent metal cation</name>
        <dbReference type="ChEBI" id="CHEBI:60240"/>
    </ligand>
</feature>
<accession>Q662W7</accession>
<name>RNH2_BORGP</name>
<keyword id="KW-0963">Cytoplasm</keyword>
<keyword id="KW-0255">Endonuclease</keyword>
<keyword id="KW-0378">Hydrolase</keyword>
<keyword id="KW-0464">Manganese</keyword>
<keyword id="KW-0479">Metal-binding</keyword>
<keyword id="KW-0540">Nuclease</keyword>
<comment type="function">
    <text evidence="1">Endonuclease that specifically degrades the RNA of RNA-DNA hybrids.</text>
</comment>
<comment type="catalytic activity">
    <reaction evidence="1">
        <text>Endonucleolytic cleavage to 5'-phosphomonoester.</text>
        <dbReference type="EC" id="3.1.26.4"/>
    </reaction>
</comment>
<comment type="cofactor">
    <cofactor evidence="1">
        <name>Mn(2+)</name>
        <dbReference type="ChEBI" id="CHEBI:29035"/>
    </cofactor>
    <cofactor evidence="1">
        <name>Mg(2+)</name>
        <dbReference type="ChEBI" id="CHEBI:18420"/>
    </cofactor>
    <text evidence="1">Manganese or magnesium. Binds 1 divalent metal ion per monomer in the absence of substrate. May bind a second metal ion after substrate binding.</text>
</comment>
<comment type="subcellular location">
    <subcellularLocation>
        <location evidence="1">Cytoplasm</location>
    </subcellularLocation>
</comment>
<comment type="similarity">
    <text evidence="1">Belongs to the RNase HII family.</text>
</comment>